<dbReference type="EMBL" id="AE006641">
    <property type="protein sequence ID" value="AAK42358.1"/>
    <property type="molecule type" value="Genomic_DNA"/>
</dbReference>
<dbReference type="PIR" id="G90387">
    <property type="entry name" value="G90387"/>
</dbReference>
<dbReference type="RefSeq" id="WP_009992115.1">
    <property type="nucleotide sequence ID" value="NC_002754.1"/>
</dbReference>
<dbReference type="PDB" id="2QBY">
    <property type="method" value="X-ray"/>
    <property type="resolution" value="3.35 A"/>
    <property type="chains" value="B=14-394"/>
</dbReference>
<dbReference type="PDBsum" id="2QBY"/>
<dbReference type="SMR" id="Q97WM8"/>
<dbReference type="DIP" id="DIP-48853N"/>
<dbReference type="FunCoup" id="Q97WM8">
    <property type="interactions" value="85"/>
</dbReference>
<dbReference type="IntAct" id="Q97WM8">
    <property type="interactions" value="1"/>
</dbReference>
<dbReference type="STRING" id="273057.SSO2184"/>
<dbReference type="PaxDb" id="273057-SSO2184"/>
<dbReference type="EnsemblBacteria" id="AAK42358">
    <property type="protein sequence ID" value="AAK42358"/>
    <property type="gene ID" value="SSO2184"/>
</dbReference>
<dbReference type="KEGG" id="sso:SSO2184"/>
<dbReference type="PATRIC" id="fig|273057.12.peg.2280"/>
<dbReference type="eggNOG" id="arCOG00467">
    <property type="taxonomic scope" value="Archaea"/>
</dbReference>
<dbReference type="HOGENOM" id="CLU_025112_3_1_2"/>
<dbReference type="InParanoid" id="Q97WM8"/>
<dbReference type="PhylomeDB" id="Q97WM8"/>
<dbReference type="EvolutionaryTrace" id="Q97WM8"/>
<dbReference type="Proteomes" id="UP000001974">
    <property type="component" value="Chromosome"/>
</dbReference>
<dbReference type="GO" id="GO:0005524">
    <property type="term" value="F:ATP binding"/>
    <property type="evidence" value="ECO:0007669"/>
    <property type="project" value="UniProtKB-UniRule"/>
</dbReference>
<dbReference type="GO" id="GO:0016887">
    <property type="term" value="F:ATP hydrolysis activity"/>
    <property type="evidence" value="ECO:0007669"/>
    <property type="project" value="InterPro"/>
</dbReference>
<dbReference type="GO" id="GO:0003677">
    <property type="term" value="F:DNA binding"/>
    <property type="evidence" value="ECO:0007669"/>
    <property type="project" value="UniProtKB-KW"/>
</dbReference>
<dbReference type="GO" id="GO:0006260">
    <property type="term" value="P:DNA replication"/>
    <property type="evidence" value="ECO:0007669"/>
    <property type="project" value="UniProtKB-UniRule"/>
</dbReference>
<dbReference type="CDD" id="cd08768">
    <property type="entry name" value="Cdc6_C"/>
    <property type="match status" value="1"/>
</dbReference>
<dbReference type="CDD" id="cd18133">
    <property type="entry name" value="HLD_clamp"/>
    <property type="match status" value="1"/>
</dbReference>
<dbReference type="FunFam" id="3.40.50.300:FF:003245">
    <property type="entry name" value="ORC1-type DNA replication protein"/>
    <property type="match status" value="1"/>
</dbReference>
<dbReference type="Gene3D" id="1.10.8.60">
    <property type="match status" value="1"/>
</dbReference>
<dbReference type="Gene3D" id="3.40.50.300">
    <property type="entry name" value="P-loop containing nucleotide triphosphate hydrolases"/>
    <property type="match status" value="1"/>
</dbReference>
<dbReference type="Gene3D" id="1.10.10.10">
    <property type="entry name" value="Winged helix-like DNA-binding domain superfamily/Winged helix DNA-binding domain"/>
    <property type="match status" value="1"/>
</dbReference>
<dbReference type="HAMAP" id="MF_01407">
    <property type="entry name" value="ORC1_type_DNA_replic_protein"/>
    <property type="match status" value="1"/>
</dbReference>
<dbReference type="InterPro" id="IPR049945">
    <property type="entry name" value="AAA_22"/>
</dbReference>
<dbReference type="InterPro" id="IPR015163">
    <property type="entry name" value="Cdc6_C"/>
</dbReference>
<dbReference type="InterPro" id="IPR055237">
    <property type="entry name" value="Cdc6_lid"/>
</dbReference>
<dbReference type="InterPro" id="IPR050311">
    <property type="entry name" value="ORC1/CDC6"/>
</dbReference>
<dbReference type="InterPro" id="IPR014277">
    <property type="entry name" value="Orc1/Cdc6_arc"/>
</dbReference>
<dbReference type="InterPro" id="IPR027417">
    <property type="entry name" value="P-loop_NTPase"/>
</dbReference>
<dbReference type="InterPro" id="IPR036388">
    <property type="entry name" value="WH-like_DNA-bd_sf"/>
</dbReference>
<dbReference type="InterPro" id="IPR036390">
    <property type="entry name" value="WH_DNA-bd_sf"/>
</dbReference>
<dbReference type="NCBIfam" id="TIGR02928">
    <property type="entry name" value="orc1/cdc6 family replication initiation protein"/>
    <property type="match status" value="1"/>
</dbReference>
<dbReference type="PANTHER" id="PTHR10763:SF26">
    <property type="entry name" value="CELL DIVISION CONTROL PROTEIN 6 HOMOLOG"/>
    <property type="match status" value="1"/>
</dbReference>
<dbReference type="PANTHER" id="PTHR10763">
    <property type="entry name" value="CELL DIVISION CONTROL PROTEIN 6-RELATED"/>
    <property type="match status" value="1"/>
</dbReference>
<dbReference type="Pfam" id="PF13401">
    <property type="entry name" value="AAA_22"/>
    <property type="match status" value="1"/>
</dbReference>
<dbReference type="Pfam" id="PF09079">
    <property type="entry name" value="Cdc6_C"/>
    <property type="match status" value="1"/>
</dbReference>
<dbReference type="Pfam" id="PF22703">
    <property type="entry name" value="Cdc6_lid"/>
    <property type="match status" value="1"/>
</dbReference>
<dbReference type="SMART" id="SM01074">
    <property type="entry name" value="Cdc6_C"/>
    <property type="match status" value="1"/>
</dbReference>
<dbReference type="SUPFAM" id="SSF52540">
    <property type="entry name" value="P-loop containing nucleoside triphosphate hydrolases"/>
    <property type="match status" value="1"/>
</dbReference>
<dbReference type="SUPFAM" id="SSF46785">
    <property type="entry name" value="Winged helix' DNA-binding domain"/>
    <property type="match status" value="1"/>
</dbReference>
<protein>
    <recommendedName>
        <fullName evidence="1">ORC1-type DNA replication protein 3</fullName>
    </recommendedName>
</protein>
<feature type="chain" id="PRO_0000151020" description="ORC1-type DNA replication protein 3">
    <location>
        <begin position="1"/>
        <end position="394"/>
    </location>
</feature>
<feature type="binding site" evidence="1">
    <location>
        <begin position="66"/>
        <end position="70"/>
    </location>
    <ligand>
        <name>ATP</name>
        <dbReference type="ChEBI" id="CHEBI:30616"/>
    </ligand>
</feature>
<feature type="binding site" evidence="1">
    <location>
        <position position="207"/>
    </location>
    <ligand>
        <name>ATP</name>
        <dbReference type="ChEBI" id="CHEBI:30616"/>
    </ligand>
</feature>
<feature type="turn" evidence="8">
    <location>
        <begin position="19"/>
        <end position="23"/>
    </location>
</feature>
<feature type="helix" evidence="8">
    <location>
        <begin position="25"/>
        <end position="28"/>
    </location>
</feature>
<feature type="helix" evidence="8">
    <location>
        <begin position="36"/>
        <end position="50"/>
    </location>
</feature>
<feature type="strand" evidence="8">
    <location>
        <begin position="57"/>
        <end position="62"/>
    </location>
</feature>
<feature type="helix" evidence="8">
    <location>
        <begin position="68"/>
        <end position="85"/>
    </location>
</feature>
<feature type="strand" evidence="8">
    <location>
        <begin position="86"/>
        <end position="89"/>
    </location>
</feature>
<feature type="strand" evidence="8">
    <location>
        <begin position="93"/>
        <end position="98"/>
    </location>
</feature>
<feature type="helix" evidence="8">
    <location>
        <begin position="99"/>
        <end position="102"/>
    </location>
</feature>
<feature type="helix" evidence="8">
    <location>
        <begin position="106"/>
        <end position="118"/>
    </location>
</feature>
<feature type="strand" evidence="8">
    <location>
        <begin position="124"/>
        <end position="127"/>
    </location>
</feature>
<feature type="helix" evidence="8">
    <location>
        <begin position="130"/>
        <end position="140"/>
    </location>
</feature>
<feature type="strand" evidence="8">
    <location>
        <begin position="141"/>
        <end position="143"/>
    </location>
</feature>
<feature type="strand" evidence="8">
    <location>
        <begin position="145"/>
        <end position="150"/>
    </location>
</feature>
<feature type="helix" evidence="8">
    <location>
        <begin position="153"/>
        <end position="157"/>
    </location>
</feature>
<feature type="helix" evidence="8">
    <location>
        <begin position="162"/>
        <end position="169"/>
    </location>
</feature>
<feature type="strand" evidence="8">
    <location>
        <begin position="171"/>
        <end position="173"/>
    </location>
</feature>
<feature type="strand" evidence="8">
    <location>
        <begin position="175"/>
        <end position="180"/>
    </location>
</feature>
<feature type="turn" evidence="8">
    <location>
        <begin position="184"/>
        <end position="189"/>
    </location>
</feature>
<feature type="helix" evidence="8">
    <location>
        <begin position="192"/>
        <end position="196"/>
    </location>
</feature>
<feature type="strand" evidence="8">
    <location>
        <begin position="201"/>
        <end position="204"/>
    </location>
</feature>
<feature type="helix" evidence="8">
    <location>
        <begin position="209"/>
        <end position="222"/>
    </location>
</feature>
<feature type="helix" evidence="8">
    <location>
        <begin position="232"/>
        <end position="242"/>
    </location>
</feature>
<feature type="helix" evidence="8">
    <location>
        <begin position="248"/>
        <end position="261"/>
    </location>
</feature>
<feature type="strand" evidence="8">
    <location>
        <begin position="264"/>
        <end position="266"/>
    </location>
</feature>
<feature type="helix" evidence="8">
    <location>
        <begin position="270"/>
        <end position="290"/>
    </location>
</feature>
<feature type="helix" evidence="8">
    <location>
        <begin position="294"/>
        <end position="304"/>
    </location>
</feature>
<feature type="helix" evidence="8">
    <location>
        <begin position="309"/>
        <end position="322"/>
    </location>
</feature>
<feature type="helix" evidence="8">
    <location>
        <begin position="330"/>
        <end position="342"/>
    </location>
</feature>
<feature type="strand" evidence="8">
    <location>
        <begin position="345"/>
        <end position="351"/>
    </location>
</feature>
<feature type="turn" evidence="8">
    <location>
        <begin position="354"/>
        <end position="357"/>
    </location>
</feature>
<feature type="strand" evidence="8">
    <location>
        <begin position="360"/>
        <end position="368"/>
    </location>
</feature>
<feature type="helix" evidence="8">
    <location>
        <begin position="369"/>
        <end position="381"/>
    </location>
</feature>
<organism>
    <name type="scientific">Saccharolobus solfataricus (strain ATCC 35092 / DSM 1617 / JCM 11322 / P2)</name>
    <name type="common">Sulfolobus solfataricus</name>
    <dbReference type="NCBI Taxonomy" id="273057"/>
    <lineage>
        <taxon>Archaea</taxon>
        <taxon>Thermoproteota</taxon>
        <taxon>Thermoprotei</taxon>
        <taxon>Sulfolobales</taxon>
        <taxon>Sulfolobaceae</taxon>
        <taxon>Saccharolobus</taxon>
    </lineage>
</organism>
<keyword id="KW-0002">3D-structure</keyword>
<keyword id="KW-0067">ATP-binding</keyword>
<keyword id="KW-0235">DNA replication</keyword>
<keyword id="KW-0238">DNA-binding</keyword>
<keyword id="KW-0547">Nucleotide-binding</keyword>
<keyword id="KW-1185">Reference proteome</keyword>
<sequence length="394" mass="44554">MHVIRETLKGGKGEVIKNPKVFIDPLSVFKEIPFREDILRDAAIAIRYFVKNEVKFSNLFLGLTGTGKTFVSKYIFNEIEEVKKEDEEYKDVKQAYVNCREVGGTPQAVLSSLAGKLTGFSVPKHGINLGEYIDKIKNGTRNIRAIIYLDEVDTLVKRRGGDIVLYQLLRSDANISVIMISNDINVRDYMEPRVLSSLGPSVIFKPYDAEQLKFILSKYAEYGLIKGTYDDEILSYIAAISAKEHGDARKAVNLLFRAAQLASGGGIIRKEHVDKAIVDYEQERLIEAVKALPFHYKLALRSLIESEDVMSAHKMYTDLCNKFKQKPLSYRRFSDIISELDMFGIVKIRIINRGRAGGVKKYALVEDKEKVLRALNETFEDSISIGDFDDVGEN</sequence>
<evidence type="ECO:0000255" key="1">
    <source>
        <dbReference type="HAMAP-Rule" id="MF_01407"/>
    </source>
</evidence>
<evidence type="ECO:0000269" key="2">
    <source>
    </source>
</evidence>
<evidence type="ECO:0000269" key="3">
    <source>
    </source>
</evidence>
<evidence type="ECO:0000269" key="4">
    <source>
    </source>
</evidence>
<evidence type="ECO:0000269" key="5">
    <source>
    </source>
</evidence>
<evidence type="ECO:0000269" key="6">
    <source>
    </source>
</evidence>
<evidence type="ECO:0000269" key="7">
    <source>
    </source>
</evidence>
<evidence type="ECO:0007829" key="8">
    <source>
        <dbReference type="PDB" id="2QBY"/>
    </source>
</evidence>
<name>CDC63_SACS2</name>
<reference key="1">
    <citation type="journal article" date="2001" name="Proc. Natl. Acad. Sci. U.S.A.">
        <title>The complete genome of the crenarchaeon Sulfolobus solfataricus P2.</title>
        <authorList>
            <person name="She Q."/>
            <person name="Singh R.K."/>
            <person name="Confalonieri F."/>
            <person name="Zivanovic Y."/>
            <person name="Allard G."/>
            <person name="Awayez M.J."/>
            <person name="Chan-Weiher C.C.-Y."/>
            <person name="Clausen I.G."/>
            <person name="Curtis B.A."/>
            <person name="De Moors A."/>
            <person name="Erauso G."/>
            <person name="Fletcher C."/>
            <person name="Gordon P.M.K."/>
            <person name="Heikamp-de Jong I."/>
            <person name="Jeffries A.C."/>
            <person name="Kozera C.J."/>
            <person name="Medina N."/>
            <person name="Peng X."/>
            <person name="Thi-Ngoc H.P."/>
            <person name="Redder P."/>
            <person name="Schenk M.E."/>
            <person name="Theriault C."/>
            <person name="Tolstrup N."/>
            <person name="Charlebois R.L."/>
            <person name="Doolittle W.F."/>
            <person name="Duguet M."/>
            <person name="Gaasterland T."/>
            <person name="Garrett R.A."/>
            <person name="Ragan M.A."/>
            <person name="Sensen C.W."/>
            <person name="Van der Oost J."/>
        </authorList>
    </citation>
    <scope>NUCLEOTIDE SEQUENCE [LARGE SCALE GENOMIC DNA]</scope>
    <source>
        <strain>ATCC 35092 / DSM 1617 / JCM 11322 / P2</strain>
    </source>
</reference>
<reference key="2">
    <citation type="journal article" date="2006" name="Extremophiles">
        <title>Biochemical characterization of two Cdc6/ORC1-like proteins from the crenarchaeon Sulfolobus solfataricus.</title>
        <authorList>
            <person name="De Felice M."/>
            <person name="Esposito L."/>
            <person name="Rossi M."/>
            <person name="Pisani F.M."/>
        </authorList>
    </citation>
    <scope>FUNCTION</scope>
    <scope>DNA-BINDING</scope>
    <scope>SUBUNIT</scope>
    <scope>INTERACTION WITH CDC6-1 AND CDC6-2</scope>
    <scope>LACK OF AUTOPHOSPHORYLATION</scope>
    <source>
        <strain>ATCC 35092 / DSM 1617 / JCM 11322 / P2</strain>
    </source>
</reference>
<reference key="3">
    <citation type="journal article" date="2007" name="Biochem. Biophys. Res. Commun.">
        <title>Divergent functions of multiple eukaryote-like Orc1/Cdc6 proteins on modulating the loading of the MCM helicase onto the origins of the hyperthermophilic archaeon Sulfolobus solfataricus P2.</title>
        <authorList>
            <person name="Jiang P.X."/>
            <person name="Wang J."/>
            <person name="Feng Y."/>
            <person name="He Z.G."/>
        </authorList>
    </citation>
    <scope>FUNCTION</scope>
    <scope>INTERACTION WITH MCM</scope>
</reference>
<reference key="4">
    <citation type="journal article" date="2007" name="Biochem. Biophys. Res. Commun.">
        <title>Three eukaryote-like Orc1/Cdc6 proteins functionally interact and mutually regulate their activities of binding to the replication origin in the hyperthermophilic archaeon Sulfolobus solfataricus P2.</title>
        <authorList>
            <person name="Wang J."/>
            <person name="Jiang P.X."/>
            <person name="Feng H."/>
            <person name="Feng Y."/>
            <person name="He Z.G."/>
        </authorList>
    </citation>
    <scope>FUNCTION</scope>
    <scope>INTERACTION WITH CDC6-1 AND CDC6-2</scope>
    <source>
        <strain>ATCC 35092 / DSM 1617 / JCM 11322 / P2</strain>
    </source>
</reference>
<reference key="5">
    <citation type="journal article" date="2008" name="J. Virol.">
        <title>Transcriptome analysis of infection of the archaeon Sulfolobus solfataricus with Sulfolobus turreted icosahedral virus.</title>
        <authorList>
            <person name="Ortmann A.C."/>
            <person name="Brumfield S.K."/>
            <person name="Walther J."/>
            <person name="McInnerney K."/>
            <person name="Brouns S.J."/>
            <person name="van de Werken H.J."/>
            <person name="Bothner B."/>
            <person name="Douglas T."/>
            <person name="van de Oost J."/>
            <person name="Young M.J."/>
        </authorList>
    </citation>
    <scope>INDUCTION BY VIRUS (MICROBIAL INFECTION)</scope>
    <source>
        <strain>2-2-12</strain>
    </source>
</reference>
<reference key="6">
    <citation type="journal article" date="2009" name="Proc. Natl. Acad. Sci. U.S.A.">
        <title>Archaeal eukaryote-like Orc1/Cdc6 initiators physically interact with DNA polymerase B1 and regulate its functions.</title>
        <authorList>
            <person name="Zhang L."/>
            <person name="Zhang L."/>
            <person name="Liu Y."/>
            <person name="Yang S."/>
            <person name="Gao C."/>
            <person name="Gong H."/>
            <person name="Feng Y."/>
            <person name="He Z.G."/>
        </authorList>
    </citation>
    <scope>FUNCTION</scope>
    <scope>INTERACTION WITH POLB1</scope>
</reference>
<reference key="7">
    <citation type="journal article" date="2007" name="Science">
        <title>Replication origin recognition and deformation by a heterodimeric archaeal Orc1 complex.</title>
        <authorList>
            <person name="Dueber E.L."/>
            <person name="Corn J.E."/>
            <person name="Bell S.D."/>
            <person name="Berger J.M."/>
        </authorList>
    </citation>
    <scope>X-RAY CRYSTALLOGRAPHY (3.35 ANGSTROMS) OF 14-394 IN COMPLEX WITH CDC6-1 AND DNA</scope>
</reference>
<gene>
    <name type="primary">cdc6-3</name>
    <name type="ordered locus">SSO2184</name>
</gene>
<accession>Q97WM8</accession>
<comment type="function">
    <text evidence="1 2 3 5 7">Involved in regulation of DNA replication. May play essential roles in origin recognition and cell cycle control of replication. Binds to DNA, with a preference for molecules that contain a bubble, a fork, or a tail. Inhibits the binding of the MCM helicase to the origin DNA and inhibits its DNA helicase activity. Also regulates the DNA polymerase and the nuclease activities of PolB1. Inhibits the DNA-binding activity of Cdc6-1 and Cdc6-2.</text>
</comment>
<comment type="subunit">
    <text evidence="2 3 4 5 7">Monomer. Interacts with Cdc6-1, Cdc6-2, MCM and PolB1.</text>
</comment>
<comment type="interaction">
    <interactant intactId="EBI-9026919">
        <id>Q97WM8</id>
    </interactant>
    <interactant intactId="EBI-15778666">
        <id>P26811</id>
        <label>dpo1</label>
    </interactant>
    <organismsDiffer>false</organismsDiffer>
    <experiments>3</experiments>
</comment>
<comment type="induction">
    <text evidence="6">(Microbial infection) At least 4-fold induced following infection by Sulfolobus turreted icosahedral virus 1 (STIV-1) in strain 2-2-12.</text>
</comment>
<comment type="miscellaneous">
    <text evidence="6">Strain 2-2-12 is a substrain of P2 that is highly susceptible to infection by Sulfolobus turreted icosahedral virus 1 (STIV-1).</text>
</comment>
<comment type="similarity">
    <text evidence="1">Belongs to the CDC6/cdc18 family.</text>
</comment>
<proteinExistence type="evidence at protein level"/>